<reference key="1">
    <citation type="journal article" date="2004" name="Nat. Biotechnol.">
        <title>Complete sequence and comparative genome analysis of the dairy bacterium Streptococcus thermophilus.</title>
        <authorList>
            <person name="Bolotin A."/>
            <person name="Quinquis B."/>
            <person name="Renault P."/>
            <person name="Sorokin A."/>
            <person name="Ehrlich S.D."/>
            <person name="Kulakauskas S."/>
            <person name="Lapidus A."/>
            <person name="Goltsman E."/>
            <person name="Mazur M."/>
            <person name="Pusch G.D."/>
            <person name="Fonstein M."/>
            <person name="Overbeek R."/>
            <person name="Kyprides N."/>
            <person name="Purnelle B."/>
            <person name="Prozzi D."/>
            <person name="Ngui K."/>
            <person name="Masuy D."/>
            <person name="Hancy F."/>
            <person name="Burteau S."/>
            <person name="Boutry M."/>
            <person name="Delcour J."/>
            <person name="Goffeau A."/>
            <person name="Hols P."/>
        </authorList>
    </citation>
    <scope>NUCLEOTIDE SEQUENCE [LARGE SCALE GENOMIC DNA]</scope>
    <source>
        <strain>ATCC BAA-250 / LMG 18311</strain>
    </source>
</reference>
<organism>
    <name type="scientific">Streptococcus thermophilus (strain ATCC BAA-250 / LMG 18311)</name>
    <dbReference type="NCBI Taxonomy" id="264199"/>
    <lineage>
        <taxon>Bacteria</taxon>
        <taxon>Bacillati</taxon>
        <taxon>Bacillota</taxon>
        <taxon>Bacilli</taxon>
        <taxon>Lactobacillales</taxon>
        <taxon>Streptococcaceae</taxon>
        <taxon>Streptococcus</taxon>
    </lineage>
</organism>
<sequence length="583" mass="65937">MERSMYAGRVRSEHIGTTITLKGWVSRRRNLGGLIFIDLRDREGLMQLVVNPENADAAVVETAESLRSEFVIEVTGTVEAREQANDNLPTGAVELKVKDLKVLNTAKTTPFEIKDGVEASDDTRMRYRYLDLRRPEMLENFKLRAKVTHTIRNYLDDLEFIDVETPMLTKSTPEGARDYLVPSRVSQGHFYALPQSPQITKQLLMNAGFDRYYQIVKCFRDEDLRGDRQPEFTQVDLETSFLNEQEIQDITEGLIAKVMKETKGVEVTLPFPRMSYDDAMNNYGSDKPDTRFDMLLQDLTELVKDVDFKVFAEAPAVKAIVVKGNADKYSRKSIDKLTDFAKQFGAKGLAWVKMTDGVLAGPVAKFLTSIEEKLTDTLQIEENDLVLFVADTLEIANNTLGALRNQIAKELDMIDNTKFNFLWVVDWPMFEWSEEEGRYMSAHHPFTLPTEDSAAELEGDLSKVRAVAYDIVLNGYELGGGSLRINQKDLQERMLKALGFSEESAYEQFGFLLEAMDYGFPPHGGLALGLDRFVMLLAGKDNIREVIAFPKNNKASDPMTQAPSLVADKQLEELALHVELENE</sequence>
<dbReference type="EC" id="6.1.1.12" evidence="1"/>
<dbReference type="EMBL" id="CP000023">
    <property type="protein sequence ID" value="AAV61563.1"/>
    <property type="molecule type" value="Genomic_DNA"/>
</dbReference>
<dbReference type="RefSeq" id="WP_011226677.1">
    <property type="nucleotide sequence ID" value="NC_006448.1"/>
</dbReference>
<dbReference type="SMR" id="Q5M283"/>
<dbReference type="STRING" id="264199.stu1969"/>
<dbReference type="GeneID" id="66899695"/>
<dbReference type="KEGG" id="stl:stu1969"/>
<dbReference type="PATRIC" id="fig|264199.4.peg.1952"/>
<dbReference type="eggNOG" id="COG0173">
    <property type="taxonomic scope" value="Bacteria"/>
</dbReference>
<dbReference type="HOGENOM" id="CLU_014330_3_2_9"/>
<dbReference type="Proteomes" id="UP000001170">
    <property type="component" value="Chromosome"/>
</dbReference>
<dbReference type="GO" id="GO:0005737">
    <property type="term" value="C:cytoplasm"/>
    <property type="evidence" value="ECO:0007669"/>
    <property type="project" value="UniProtKB-SubCell"/>
</dbReference>
<dbReference type="GO" id="GO:0004815">
    <property type="term" value="F:aspartate-tRNA ligase activity"/>
    <property type="evidence" value="ECO:0007669"/>
    <property type="project" value="UniProtKB-UniRule"/>
</dbReference>
<dbReference type="GO" id="GO:0005524">
    <property type="term" value="F:ATP binding"/>
    <property type="evidence" value="ECO:0007669"/>
    <property type="project" value="UniProtKB-UniRule"/>
</dbReference>
<dbReference type="GO" id="GO:0140096">
    <property type="term" value="F:catalytic activity, acting on a protein"/>
    <property type="evidence" value="ECO:0007669"/>
    <property type="project" value="UniProtKB-ARBA"/>
</dbReference>
<dbReference type="GO" id="GO:0003676">
    <property type="term" value="F:nucleic acid binding"/>
    <property type="evidence" value="ECO:0007669"/>
    <property type="project" value="InterPro"/>
</dbReference>
<dbReference type="GO" id="GO:0016740">
    <property type="term" value="F:transferase activity"/>
    <property type="evidence" value="ECO:0007669"/>
    <property type="project" value="UniProtKB-ARBA"/>
</dbReference>
<dbReference type="GO" id="GO:0006422">
    <property type="term" value="P:aspartyl-tRNA aminoacylation"/>
    <property type="evidence" value="ECO:0007669"/>
    <property type="project" value="UniProtKB-UniRule"/>
</dbReference>
<dbReference type="CDD" id="cd00777">
    <property type="entry name" value="AspRS_core"/>
    <property type="match status" value="1"/>
</dbReference>
<dbReference type="CDD" id="cd04317">
    <property type="entry name" value="EcAspRS_like_N"/>
    <property type="match status" value="1"/>
</dbReference>
<dbReference type="Gene3D" id="3.30.930.10">
    <property type="entry name" value="Bira Bifunctional Protein, Domain 2"/>
    <property type="match status" value="1"/>
</dbReference>
<dbReference type="Gene3D" id="3.30.1360.30">
    <property type="entry name" value="GAD-like domain"/>
    <property type="match status" value="1"/>
</dbReference>
<dbReference type="Gene3D" id="2.40.50.140">
    <property type="entry name" value="Nucleic acid-binding proteins"/>
    <property type="match status" value="1"/>
</dbReference>
<dbReference type="HAMAP" id="MF_00044">
    <property type="entry name" value="Asp_tRNA_synth_type1"/>
    <property type="match status" value="1"/>
</dbReference>
<dbReference type="InterPro" id="IPR004364">
    <property type="entry name" value="Aa-tRNA-synt_II"/>
</dbReference>
<dbReference type="InterPro" id="IPR006195">
    <property type="entry name" value="aa-tRNA-synth_II"/>
</dbReference>
<dbReference type="InterPro" id="IPR045864">
    <property type="entry name" value="aa-tRNA-synth_II/BPL/LPL"/>
</dbReference>
<dbReference type="InterPro" id="IPR004524">
    <property type="entry name" value="Asp-tRNA-ligase_1"/>
</dbReference>
<dbReference type="InterPro" id="IPR047089">
    <property type="entry name" value="Asp-tRNA-ligase_1_N"/>
</dbReference>
<dbReference type="InterPro" id="IPR002312">
    <property type="entry name" value="Asp/Asn-tRNA-synth_IIb"/>
</dbReference>
<dbReference type="InterPro" id="IPR047090">
    <property type="entry name" value="AspRS_core"/>
</dbReference>
<dbReference type="InterPro" id="IPR004115">
    <property type="entry name" value="GAD-like_sf"/>
</dbReference>
<dbReference type="InterPro" id="IPR029351">
    <property type="entry name" value="GAD_dom"/>
</dbReference>
<dbReference type="InterPro" id="IPR012340">
    <property type="entry name" value="NA-bd_OB-fold"/>
</dbReference>
<dbReference type="InterPro" id="IPR004365">
    <property type="entry name" value="NA-bd_OB_tRNA"/>
</dbReference>
<dbReference type="NCBIfam" id="TIGR00459">
    <property type="entry name" value="aspS_bact"/>
    <property type="match status" value="1"/>
</dbReference>
<dbReference type="NCBIfam" id="NF001750">
    <property type="entry name" value="PRK00476.1"/>
    <property type="match status" value="1"/>
</dbReference>
<dbReference type="PANTHER" id="PTHR22594:SF5">
    <property type="entry name" value="ASPARTATE--TRNA LIGASE, MITOCHONDRIAL"/>
    <property type="match status" value="1"/>
</dbReference>
<dbReference type="PANTHER" id="PTHR22594">
    <property type="entry name" value="ASPARTYL/LYSYL-TRNA SYNTHETASE"/>
    <property type="match status" value="1"/>
</dbReference>
<dbReference type="Pfam" id="PF02938">
    <property type="entry name" value="GAD"/>
    <property type="match status" value="1"/>
</dbReference>
<dbReference type="Pfam" id="PF00152">
    <property type="entry name" value="tRNA-synt_2"/>
    <property type="match status" value="1"/>
</dbReference>
<dbReference type="Pfam" id="PF01336">
    <property type="entry name" value="tRNA_anti-codon"/>
    <property type="match status" value="1"/>
</dbReference>
<dbReference type="PRINTS" id="PR01042">
    <property type="entry name" value="TRNASYNTHASP"/>
</dbReference>
<dbReference type="SUPFAM" id="SSF55681">
    <property type="entry name" value="Class II aaRS and biotin synthetases"/>
    <property type="match status" value="1"/>
</dbReference>
<dbReference type="SUPFAM" id="SSF55261">
    <property type="entry name" value="GAD domain-like"/>
    <property type="match status" value="1"/>
</dbReference>
<dbReference type="SUPFAM" id="SSF50249">
    <property type="entry name" value="Nucleic acid-binding proteins"/>
    <property type="match status" value="1"/>
</dbReference>
<dbReference type="PROSITE" id="PS50862">
    <property type="entry name" value="AA_TRNA_LIGASE_II"/>
    <property type="match status" value="1"/>
</dbReference>
<comment type="function">
    <text evidence="1">Catalyzes the attachment of L-aspartate to tRNA(Asp) in a two-step reaction: L-aspartate is first activated by ATP to form Asp-AMP and then transferred to the acceptor end of tRNA(Asp).</text>
</comment>
<comment type="catalytic activity">
    <reaction evidence="1">
        <text>tRNA(Asp) + L-aspartate + ATP = L-aspartyl-tRNA(Asp) + AMP + diphosphate</text>
        <dbReference type="Rhea" id="RHEA:19649"/>
        <dbReference type="Rhea" id="RHEA-COMP:9660"/>
        <dbReference type="Rhea" id="RHEA-COMP:9678"/>
        <dbReference type="ChEBI" id="CHEBI:29991"/>
        <dbReference type="ChEBI" id="CHEBI:30616"/>
        <dbReference type="ChEBI" id="CHEBI:33019"/>
        <dbReference type="ChEBI" id="CHEBI:78442"/>
        <dbReference type="ChEBI" id="CHEBI:78516"/>
        <dbReference type="ChEBI" id="CHEBI:456215"/>
        <dbReference type="EC" id="6.1.1.12"/>
    </reaction>
</comment>
<comment type="subunit">
    <text evidence="1">Homodimer.</text>
</comment>
<comment type="subcellular location">
    <subcellularLocation>
        <location evidence="1">Cytoplasm</location>
    </subcellularLocation>
</comment>
<comment type="similarity">
    <text evidence="1">Belongs to the class-II aminoacyl-tRNA synthetase family. Type 1 subfamily.</text>
</comment>
<feature type="chain" id="PRO_0000110962" description="Aspartate--tRNA ligase">
    <location>
        <begin position="1"/>
        <end position="583"/>
    </location>
</feature>
<feature type="region of interest" description="Aspartate" evidence="1">
    <location>
        <begin position="198"/>
        <end position="201"/>
    </location>
</feature>
<feature type="binding site" evidence="1">
    <location>
        <position position="174"/>
    </location>
    <ligand>
        <name>L-aspartate</name>
        <dbReference type="ChEBI" id="CHEBI:29991"/>
    </ligand>
</feature>
<feature type="binding site" evidence="1">
    <location>
        <begin position="220"/>
        <end position="222"/>
    </location>
    <ligand>
        <name>ATP</name>
        <dbReference type="ChEBI" id="CHEBI:30616"/>
    </ligand>
</feature>
<feature type="binding site" evidence="1">
    <location>
        <position position="220"/>
    </location>
    <ligand>
        <name>L-aspartate</name>
        <dbReference type="ChEBI" id="CHEBI:29991"/>
    </ligand>
</feature>
<feature type="binding site" evidence="1">
    <location>
        <position position="229"/>
    </location>
    <ligand>
        <name>ATP</name>
        <dbReference type="ChEBI" id="CHEBI:30616"/>
    </ligand>
</feature>
<feature type="binding site" evidence="1">
    <location>
        <position position="443"/>
    </location>
    <ligand>
        <name>L-aspartate</name>
        <dbReference type="ChEBI" id="CHEBI:29991"/>
    </ligand>
</feature>
<feature type="binding site" evidence="1">
    <location>
        <position position="477"/>
    </location>
    <ligand>
        <name>ATP</name>
        <dbReference type="ChEBI" id="CHEBI:30616"/>
    </ligand>
</feature>
<feature type="binding site" evidence="1">
    <location>
        <position position="484"/>
    </location>
    <ligand>
        <name>L-aspartate</name>
        <dbReference type="ChEBI" id="CHEBI:29991"/>
    </ligand>
</feature>
<feature type="binding site" evidence="1">
    <location>
        <begin position="529"/>
        <end position="532"/>
    </location>
    <ligand>
        <name>ATP</name>
        <dbReference type="ChEBI" id="CHEBI:30616"/>
    </ligand>
</feature>
<proteinExistence type="inferred from homology"/>
<gene>
    <name evidence="1" type="primary">aspS</name>
    <name type="ordered locus">stu1969</name>
</gene>
<name>SYD_STRT2</name>
<accession>Q5M283</accession>
<evidence type="ECO:0000255" key="1">
    <source>
        <dbReference type="HAMAP-Rule" id="MF_00044"/>
    </source>
</evidence>
<protein>
    <recommendedName>
        <fullName evidence="1">Aspartate--tRNA ligase</fullName>
        <ecNumber evidence="1">6.1.1.12</ecNumber>
    </recommendedName>
    <alternativeName>
        <fullName evidence="1">Aspartyl-tRNA synthetase</fullName>
        <shortName evidence="1">AspRS</shortName>
    </alternativeName>
</protein>
<keyword id="KW-0030">Aminoacyl-tRNA synthetase</keyword>
<keyword id="KW-0067">ATP-binding</keyword>
<keyword id="KW-0963">Cytoplasm</keyword>
<keyword id="KW-0436">Ligase</keyword>
<keyword id="KW-0547">Nucleotide-binding</keyword>
<keyword id="KW-0648">Protein biosynthesis</keyword>
<keyword id="KW-1185">Reference proteome</keyword>